<organism>
    <name type="scientific">Pectobacterium carotovorum</name>
    <name type="common">Erwinia carotovora</name>
    <dbReference type="NCBI Taxonomy" id="554"/>
    <lineage>
        <taxon>Bacteria</taxon>
        <taxon>Pseudomonadati</taxon>
        <taxon>Pseudomonadota</taxon>
        <taxon>Gammaproteobacteria</taxon>
        <taxon>Enterobacterales</taxon>
        <taxon>Pectobacteriaceae</taxon>
        <taxon>Pectobacterium</taxon>
    </lineage>
</organism>
<name>DUSB_PECCA</name>
<protein>
    <recommendedName>
        <fullName evidence="1">tRNA-dihydrouridine synthase B</fullName>
        <ecNumber evidence="1">1.3.1.-</ecNumber>
    </recommendedName>
</protein>
<feature type="chain" id="PRO_0000162087" description="tRNA-dihydrouridine synthase B">
    <location>
        <begin position="1"/>
        <end position="321"/>
    </location>
</feature>
<feature type="active site" description="Proton donor" evidence="1">
    <location>
        <position position="100"/>
    </location>
</feature>
<feature type="binding site" evidence="1">
    <location>
        <begin position="16"/>
        <end position="18"/>
    </location>
    <ligand>
        <name>FMN</name>
        <dbReference type="ChEBI" id="CHEBI:58210"/>
    </ligand>
</feature>
<feature type="binding site" evidence="1">
    <location>
        <position position="70"/>
    </location>
    <ligand>
        <name>FMN</name>
        <dbReference type="ChEBI" id="CHEBI:58210"/>
    </ligand>
</feature>
<feature type="binding site" evidence="1">
    <location>
        <position position="139"/>
    </location>
    <ligand>
        <name>FMN</name>
        <dbReference type="ChEBI" id="CHEBI:58210"/>
    </ligand>
</feature>
<feature type="binding site" evidence="1">
    <location>
        <begin position="200"/>
        <end position="202"/>
    </location>
    <ligand>
        <name>FMN</name>
        <dbReference type="ChEBI" id="CHEBI:58210"/>
    </ligand>
</feature>
<feature type="binding site" evidence="1">
    <location>
        <begin position="224"/>
        <end position="225"/>
    </location>
    <ligand>
        <name>FMN</name>
        <dbReference type="ChEBI" id="CHEBI:58210"/>
    </ligand>
</feature>
<gene>
    <name evidence="1" type="primary">dusB</name>
</gene>
<evidence type="ECO:0000255" key="1">
    <source>
        <dbReference type="HAMAP-Rule" id="MF_02042"/>
    </source>
</evidence>
<keyword id="KW-0285">Flavoprotein</keyword>
<keyword id="KW-0288">FMN</keyword>
<keyword id="KW-0521">NADP</keyword>
<keyword id="KW-0560">Oxidoreductase</keyword>
<keyword id="KW-0694">RNA-binding</keyword>
<keyword id="KW-0819">tRNA processing</keyword>
<keyword id="KW-0820">tRNA-binding</keyword>
<reference key="1">
    <citation type="journal article" date="1998" name="J. Bacteriol.">
        <title>Identification and characterization of the fis operon in enteric bacteria.</title>
        <authorList>
            <person name="Beach M.B."/>
            <person name="Osuna R."/>
        </authorList>
    </citation>
    <scope>NUCLEOTIDE SEQUENCE [GENOMIC DNA]</scope>
</reference>
<proteinExistence type="inferred from homology"/>
<sequence length="321" mass="35655">MHIGQFQLTNRLIAAPMAGISDRPFRALCHAMGAGMTVSEMLSSNPEVWRSDKSRLRMVHSDEPGIRAVQIAGCDPDEMAAARRINADSGAQIIDINMGCPAKKVNRKMAGSALLQYPDLVKQILSTVVKAVDVPVTLKIRTGWAPEHRNCVEIAKLAEDCGIQALTIHGRTRACLFNGFAEYDSIRAVKQAVSIPIIANGDITDPHKARAVLDYTGADALMIGRAAQGRPWIFREIQHYLDTGELLAPLPLVEVKRLLIEHIRELHDFYGPGKGFRIARKHVSWYLQEHAPNDQFRRTFNAIEDASEQLEALKAYFENLA</sequence>
<comment type="function">
    <text evidence="1">Catalyzes the synthesis of 5,6-dihydrouridine (D), a modified base found in the D-loop of most tRNAs, via the reduction of the C5-C6 double bond in target uridines.</text>
</comment>
<comment type="catalytic activity">
    <reaction evidence="1">
        <text>a 5,6-dihydrouridine in tRNA + NAD(+) = a uridine in tRNA + NADH + H(+)</text>
        <dbReference type="Rhea" id="RHEA:54452"/>
        <dbReference type="Rhea" id="RHEA-COMP:13339"/>
        <dbReference type="Rhea" id="RHEA-COMP:13887"/>
        <dbReference type="ChEBI" id="CHEBI:15378"/>
        <dbReference type="ChEBI" id="CHEBI:57540"/>
        <dbReference type="ChEBI" id="CHEBI:57945"/>
        <dbReference type="ChEBI" id="CHEBI:65315"/>
        <dbReference type="ChEBI" id="CHEBI:74443"/>
    </reaction>
</comment>
<comment type="catalytic activity">
    <reaction evidence="1">
        <text>a 5,6-dihydrouridine in tRNA + NADP(+) = a uridine in tRNA + NADPH + H(+)</text>
        <dbReference type="Rhea" id="RHEA:23624"/>
        <dbReference type="Rhea" id="RHEA-COMP:13339"/>
        <dbReference type="Rhea" id="RHEA-COMP:13887"/>
        <dbReference type="ChEBI" id="CHEBI:15378"/>
        <dbReference type="ChEBI" id="CHEBI:57783"/>
        <dbReference type="ChEBI" id="CHEBI:58349"/>
        <dbReference type="ChEBI" id="CHEBI:65315"/>
        <dbReference type="ChEBI" id="CHEBI:74443"/>
    </reaction>
</comment>
<comment type="cofactor">
    <cofactor evidence="1">
        <name>FMN</name>
        <dbReference type="ChEBI" id="CHEBI:58210"/>
    </cofactor>
</comment>
<comment type="similarity">
    <text evidence="1">Belongs to the Dus family. DusB subfamily.</text>
</comment>
<accession>O52539</accession>
<dbReference type="EC" id="1.3.1.-" evidence="1"/>
<dbReference type="EMBL" id="AF040381">
    <property type="protein sequence ID" value="AAC77892.1"/>
    <property type="molecule type" value="Genomic_DNA"/>
</dbReference>
<dbReference type="SMR" id="O52539"/>
<dbReference type="GO" id="GO:0050660">
    <property type="term" value="F:flavin adenine dinucleotide binding"/>
    <property type="evidence" value="ECO:0007669"/>
    <property type="project" value="InterPro"/>
</dbReference>
<dbReference type="GO" id="GO:0010181">
    <property type="term" value="F:FMN binding"/>
    <property type="evidence" value="ECO:0007669"/>
    <property type="project" value="UniProtKB-UniRule"/>
</dbReference>
<dbReference type="GO" id="GO:0000049">
    <property type="term" value="F:tRNA binding"/>
    <property type="evidence" value="ECO:0007669"/>
    <property type="project" value="UniProtKB-UniRule"/>
</dbReference>
<dbReference type="GO" id="GO:0017150">
    <property type="term" value="F:tRNA dihydrouridine synthase activity"/>
    <property type="evidence" value="ECO:0007669"/>
    <property type="project" value="UniProtKB-UniRule"/>
</dbReference>
<dbReference type="CDD" id="cd02801">
    <property type="entry name" value="DUS_like_FMN"/>
    <property type="match status" value="1"/>
</dbReference>
<dbReference type="FunFam" id="1.10.1200.80:FF:000001">
    <property type="entry name" value="tRNA-dihydrouridine synthase B"/>
    <property type="match status" value="1"/>
</dbReference>
<dbReference type="FunFam" id="3.20.20.70:FF:000051">
    <property type="entry name" value="tRNA-dihydrouridine synthase B"/>
    <property type="match status" value="1"/>
</dbReference>
<dbReference type="Gene3D" id="3.20.20.70">
    <property type="entry name" value="Aldolase class I"/>
    <property type="match status" value="1"/>
</dbReference>
<dbReference type="Gene3D" id="1.10.1200.80">
    <property type="entry name" value="Putative flavin oxidoreducatase, domain 2"/>
    <property type="match status" value="1"/>
</dbReference>
<dbReference type="HAMAP" id="MF_02042">
    <property type="entry name" value="DusB_subfam"/>
    <property type="match status" value="1"/>
</dbReference>
<dbReference type="InterPro" id="IPR013785">
    <property type="entry name" value="Aldolase_TIM"/>
</dbReference>
<dbReference type="InterPro" id="IPR035587">
    <property type="entry name" value="DUS-like_FMN-bd"/>
</dbReference>
<dbReference type="InterPro" id="IPR001269">
    <property type="entry name" value="DUS_fam"/>
</dbReference>
<dbReference type="InterPro" id="IPR032887">
    <property type="entry name" value="DusB"/>
</dbReference>
<dbReference type="InterPro" id="IPR004652">
    <property type="entry name" value="DusB-like"/>
</dbReference>
<dbReference type="InterPro" id="IPR024036">
    <property type="entry name" value="tRNA-dHydroUridine_Synthase_C"/>
</dbReference>
<dbReference type="InterPro" id="IPR018517">
    <property type="entry name" value="tRNA_hU_synthase_CS"/>
</dbReference>
<dbReference type="NCBIfam" id="TIGR00737">
    <property type="entry name" value="nifR3_yhdG"/>
    <property type="match status" value="1"/>
</dbReference>
<dbReference type="PANTHER" id="PTHR45846">
    <property type="entry name" value="TRNA-DIHYDROURIDINE(47) SYNTHASE [NAD(P)(+)]-LIKE"/>
    <property type="match status" value="1"/>
</dbReference>
<dbReference type="PANTHER" id="PTHR45846:SF1">
    <property type="entry name" value="TRNA-DIHYDROURIDINE(47) SYNTHASE [NAD(P)(+)]-LIKE"/>
    <property type="match status" value="1"/>
</dbReference>
<dbReference type="Pfam" id="PF01207">
    <property type="entry name" value="Dus"/>
    <property type="match status" value="1"/>
</dbReference>
<dbReference type="PIRSF" id="PIRSF006621">
    <property type="entry name" value="Dus"/>
    <property type="match status" value="1"/>
</dbReference>
<dbReference type="SUPFAM" id="SSF51395">
    <property type="entry name" value="FMN-linked oxidoreductases"/>
    <property type="match status" value="1"/>
</dbReference>
<dbReference type="PROSITE" id="PS01136">
    <property type="entry name" value="UPF0034"/>
    <property type="match status" value="1"/>
</dbReference>